<geneLocation type="mitochondrion"/>
<proteinExistence type="evidence at transcript level"/>
<name>M1090_ARATH</name>
<feature type="chain" id="PRO_0000196811" description="Uncharacterized mitochondrial protein AtMg01090">
    <location>
        <begin position="1"/>
        <end position="262"/>
    </location>
</feature>
<feature type="transmembrane region" description="Helical" evidence="1">
    <location>
        <begin position="4"/>
        <end position="24"/>
    </location>
</feature>
<feature type="transmembrane region" description="Helical" evidence="1">
    <location>
        <begin position="28"/>
        <end position="48"/>
    </location>
</feature>
<feature type="transmembrane region" description="Helical" evidence="1">
    <location>
        <begin position="62"/>
        <end position="82"/>
    </location>
</feature>
<feature type="coiled-coil region" evidence="1">
    <location>
        <begin position="152"/>
        <end position="181"/>
    </location>
</feature>
<feature type="sequence conflict" description="In Ref. 3; AAM15515." evidence="2" ref="3">
    <original>T</original>
    <variation>K</variation>
    <location>
        <position position="87"/>
    </location>
</feature>
<feature type="sequence conflict" description="In Ref. 3; AAM15515." evidence="2" ref="3">
    <original>E</original>
    <variation>A</variation>
    <location>
        <position position="175"/>
    </location>
</feature>
<sequence length="262" mass="29637">MYLLIVFLSMLSSSVAGFFGRFLGSESVSRFNLIIFLILLVFSICLFRSLKQYLGKRMTQWCYLALVCQISLFLVLLRSHILAGFGTFSADVFTVFMGTFSVTGSSGGIVNHQDGASSEWFTYTSDMVEDSASSGRTSSSVNQPIPEEQAWEREARAQEHDRISAEVETITSACENLEAAMVRKAQILLHQRGVTLGDPEDVKRALQLALHDDWEHAIDDRKRHFTVLRRNFGTARCERWNPFIDELRGLGNHQVNARHYVD</sequence>
<organism>
    <name type="scientific">Arabidopsis thaliana</name>
    <name type="common">Mouse-ear cress</name>
    <dbReference type="NCBI Taxonomy" id="3702"/>
    <lineage>
        <taxon>Eukaryota</taxon>
        <taxon>Viridiplantae</taxon>
        <taxon>Streptophyta</taxon>
        <taxon>Embryophyta</taxon>
        <taxon>Tracheophyta</taxon>
        <taxon>Spermatophyta</taxon>
        <taxon>Magnoliopsida</taxon>
        <taxon>eudicotyledons</taxon>
        <taxon>Gunneridae</taxon>
        <taxon>Pentapetalae</taxon>
        <taxon>rosids</taxon>
        <taxon>malvids</taxon>
        <taxon>Brassicales</taxon>
        <taxon>Brassicaceae</taxon>
        <taxon>Camelineae</taxon>
        <taxon>Arabidopsis</taxon>
    </lineage>
</organism>
<gene>
    <name type="ordered locus">AtMg01090</name>
</gene>
<reference key="1">
    <citation type="journal article" date="1997" name="Nat. Genet.">
        <title>The mitochondrial genome of Arabidopsis thaliana contains 57 genes in 366,924 nucleotides.</title>
        <authorList>
            <person name="Unseld M."/>
            <person name="Marienfeld J.R."/>
            <person name="Brandt P."/>
            <person name="Brennicke A."/>
        </authorList>
    </citation>
    <scope>NUCLEOTIDE SEQUENCE [LARGE SCALE GENOMIC DNA]</scope>
    <source>
        <strain>cv. C24</strain>
    </source>
</reference>
<reference key="2">
    <citation type="journal article" date="2018" name="Plant Cell">
        <title>Correction of persistent errors in Arabidopsis reference mitochondrial genomes.</title>
        <authorList>
            <person name="Sloan D.B."/>
            <person name="Wu Z."/>
            <person name="Sharbrough J."/>
        </authorList>
    </citation>
    <scope>NUCLEOTIDE SEQUENCE [LARGE SCALE GENOMIC DNA]</scope>
    <source>
        <strain>cv. Columbia</strain>
    </source>
</reference>
<reference key="3">
    <citation type="journal article" date="1999" name="Nature">
        <title>Sequence and analysis of chromosome 2 of the plant Arabidopsis thaliana.</title>
        <authorList>
            <person name="Lin X."/>
            <person name="Kaul S."/>
            <person name="Rounsley S.D."/>
            <person name="Shea T.P."/>
            <person name="Benito M.-I."/>
            <person name="Town C.D."/>
            <person name="Fujii C.Y."/>
            <person name="Mason T.M."/>
            <person name="Bowman C.L."/>
            <person name="Barnstead M.E."/>
            <person name="Feldblyum T.V."/>
            <person name="Buell C.R."/>
            <person name="Ketchum K.A."/>
            <person name="Lee J.J."/>
            <person name="Ronning C.M."/>
            <person name="Koo H.L."/>
            <person name="Moffat K.S."/>
            <person name="Cronin L.A."/>
            <person name="Shen M."/>
            <person name="Pai G."/>
            <person name="Van Aken S."/>
            <person name="Umayam L."/>
            <person name="Tallon L.J."/>
            <person name="Gill J.E."/>
            <person name="Adams M.D."/>
            <person name="Carrera A.J."/>
            <person name="Creasy T.H."/>
            <person name="Goodman H.M."/>
            <person name="Somerville C.R."/>
            <person name="Copenhaver G.P."/>
            <person name="Preuss D."/>
            <person name="Nierman W.C."/>
            <person name="White O."/>
            <person name="Eisen J.A."/>
            <person name="Salzberg S.L."/>
            <person name="Fraser C.M."/>
            <person name="Venter J.C."/>
        </authorList>
    </citation>
    <scope>NUCLEOTIDE SEQUENCE [LARGE SCALE GENOMIC DNA] (AT2G07777)</scope>
    <source>
        <strain>cv. Columbia</strain>
    </source>
</reference>
<reference key="4">
    <citation type="submission" date="2004-06" db="EMBL/GenBank/DDBJ databases">
        <title>Reconstruction of cDNA sequences for hypothetical genes in Arabidopsis thaliana from 5' and 3' RACE products.</title>
        <authorList>
            <person name="Xiao Y.-L."/>
            <person name="Underwood B.A."/>
            <person name="Moskal W.A. Jr."/>
            <person name="Wang W."/>
            <person name="Redman J.C."/>
            <person name="Wu H.C."/>
            <person name="Utterback T."/>
            <person name="Town C.D."/>
        </authorList>
    </citation>
    <scope>NUCLEOTIDE SEQUENCE [LARGE SCALE MRNA] (AT2G07777)</scope>
    <source>
        <strain>cv. Columbia</strain>
    </source>
</reference>
<reference key="5">
    <citation type="submission" date="2005-03" db="EMBL/GenBank/DDBJ databases">
        <authorList>
            <person name="Underwood B.A."/>
            <person name="Xiao Y.-L."/>
            <person name="Moskal W.A. Jr."/>
            <person name="Monaghan E.L."/>
            <person name="Wang W."/>
            <person name="Redman J.C."/>
            <person name="Wu H.C."/>
            <person name="Utterback T."/>
            <person name="Town C.D."/>
        </authorList>
    </citation>
    <scope>NUCLEOTIDE SEQUENCE [LARGE SCALE GENOMIC DNA] (AT2G07777)</scope>
    <source>
        <strain>cv. Columbia</strain>
    </source>
</reference>
<evidence type="ECO:0000255" key="1"/>
<evidence type="ECO:0000305" key="2"/>
<keyword id="KW-0175">Coiled coil</keyword>
<keyword id="KW-0472">Membrane</keyword>
<keyword id="KW-0496">Mitochondrion</keyword>
<keyword id="KW-1185">Reference proteome</keyword>
<keyword id="KW-0812">Transmembrane</keyword>
<keyword id="KW-1133">Transmembrane helix</keyword>
<accession>P92541</accession>
<accession>Q1ZXX3</accession>
<accession>Q6DSS8</accession>
<accession>Q8S875</accession>
<dbReference type="EMBL" id="Y08501">
    <property type="protein sequence ID" value="CAA69794.1"/>
    <property type="molecule type" value="Genomic_DNA"/>
</dbReference>
<dbReference type="EMBL" id="BK010421">
    <property type="status" value="NOT_ANNOTATED_CDS"/>
    <property type="molecule type" value="Genomic_DNA"/>
</dbReference>
<dbReference type="EMBL" id="AC007730">
    <property type="protein sequence ID" value="AAM15515.1"/>
    <property type="status" value="ALT_SEQ"/>
    <property type="molecule type" value="Genomic_DNA"/>
</dbReference>
<dbReference type="EMBL" id="AY648320">
    <property type="protein sequence ID" value="AAT68731.1"/>
    <property type="molecule type" value="mRNA"/>
</dbReference>
<dbReference type="EMBL" id="AY924739">
    <property type="protein sequence ID" value="AAX23814.1"/>
    <property type="molecule type" value="Genomic_DNA"/>
</dbReference>
<dbReference type="RefSeq" id="NP_085562.1">
    <property type="nucleotide sequence ID" value="NC_001284.2"/>
</dbReference>
<dbReference type="SMR" id="P92541"/>
<dbReference type="BioGRID" id="566561">
    <property type="interactions" value="1"/>
</dbReference>
<dbReference type="STRING" id="3702.P92541"/>
<dbReference type="iPTMnet" id="P92541"/>
<dbReference type="PaxDb" id="3702-ATMG01090.1"/>
<dbReference type="EnsemblPlants" id="ATMG01090.1">
    <property type="protein sequence ID" value="ATMG01090.1"/>
    <property type="gene ID" value="ATMG01090"/>
</dbReference>
<dbReference type="Gramene" id="ATMG01090.1">
    <property type="protein sequence ID" value="ATMG01090.1"/>
    <property type="gene ID" value="ATMG01090"/>
</dbReference>
<dbReference type="Araport" id="ATMG01090"/>
<dbReference type="TAIR" id="ATMG01090">
    <property type="gene designation" value="ORF262"/>
</dbReference>
<dbReference type="HOGENOM" id="CLU_1062990_0_0_1"/>
<dbReference type="InParanoid" id="P92541"/>
<dbReference type="PRO" id="PR:P92541"/>
<dbReference type="Proteomes" id="UP000006548">
    <property type="component" value="Mitochondrion MT"/>
</dbReference>
<dbReference type="ExpressionAtlas" id="P92541">
    <property type="expression patterns" value="baseline and differential"/>
</dbReference>
<dbReference type="GO" id="GO:0031966">
    <property type="term" value="C:mitochondrial membrane"/>
    <property type="evidence" value="ECO:0007669"/>
    <property type="project" value="UniProtKB-SubCell"/>
</dbReference>
<dbReference type="InterPro" id="IPR052694">
    <property type="entry name" value="Mt_uS3-like"/>
</dbReference>
<dbReference type="PANTHER" id="PTHR35289:SF1">
    <property type="entry name" value="ATP SYNTHASE 9 MITOCHONDRIAL-RELATED"/>
    <property type="match status" value="1"/>
</dbReference>
<dbReference type="PANTHER" id="PTHR35289">
    <property type="entry name" value="TRANSMEMBRANE PROTEIN"/>
    <property type="match status" value="1"/>
</dbReference>
<comment type="subcellular location">
    <subcellularLocation>
        <location evidence="2">Mitochondrion membrane</location>
        <topology evidence="2">Multi-pass membrane protein</topology>
    </subcellularLocation>
</comment>
<comment type="miscellaneous">
    <text>A stretch of 270 kb of the mitochondrial genome is duplicated within the centromere of chromosome 2 resulting in the duplication of the gene. The expression of this duplicated gene (At2g07777) is demonstrated.</text>
</comment>
<comment type="sequence caution" evidence="2">
    <conflict type="erroneous gene model prediction">
        <sequence resource="EMBL-CDS" id="AAM15515"/>
    </conflict>
</comment>
<protein>
    <recommendedName>
        <fullName>Uncharacterized mitochondrial protein AtMg01090</fullName>
    </recommendedName>
    <alternativeName>
        <fullName>ORF262</fullName>
    </alternativeName>
</protein>